<keyword id="KW-0378">Hydrolase</keyword>
<keyword id="KW-0464">Manganese</keyword>
<keyword id="KW-0479">Metal-binding</keyword>
<keyword id="KW-0904">Protein phosphatase</keyword>
<keyword id="KW-1185">Reference proteome</keyword>
<keyword id="KW-0732">Signal</keyword>
<accession>A0A509AQU3</accession>
<comment type="function">
    <text evidence="3">Phosphatase which plays an essential role in the development and differentiation of the ookinete and in the formation of ookinete micronemes.</text>
</comment>
<comment type="cofactor">
    <cofactor evidence="1">
        <name>Mn(2+)</name>
        <dbReference type="ChEBI" id="CHEBI:29035"/>
    </cofactor>
    <text evidence="1">Binds 2 manganese ions per subunit.</text>
</comment>
<comment type="developmental stage">
    <text evidence="3">Expressed at all stages including blood asexual stage, gametocytes, zygote, oocyst, ookinete and sporozoites.</text>
</comment>
<comment type="disruption phenotype">
    <text evidence="3">Ookinete formation and differentiation is reduced by 55-60%; the few ookinetes that differentiate have normal gliding motility (PubMed:23434509). In infected S.stephensi mosquitos, no oocysts are formed in the midgut (PubMed:23434509). However, ookinetes injected directly into the hemocoel produce viable sporozoites that are able to infect mice (PubMed:23434509). In infected A.gambiae L3-5 mosquitos, slight reduction in ookinete melanization indicating that the ookinete cross the midgut epithelium but fail to form oocysts (PubMed:23434509). Ookinetes have a reduction in the number of apical micronemes and micronemal gene expression of CTRP and SOAP is down-regulated (PubMed:23434509). Also, in ookinetes, mRNA expression of female nek4 is reduced (PubMed:23434509). Male gametocyte exflagellation is normal (PubMed:23434509).</text>
</comment>
<comment type="similarity">
    <text evidence="5">Belongs to the metallophosphoesterase superfamily. SLP family.</text>
</comment>
<name>SHLP1_PLABA</name>
<organism evidence="7">
    <name type="scientific">Plasmodium berghei (strain Anka)</name>
    <dbReference type="NCBI Taxonomy" id="5823"/>
    <lineage>
        <taxon>Eukaryota</taxon>
        <taxon>Sar</taxon>
        <taxon>Alveolata</taxon>
        <taxon>Apicomplexa</taxon>
        <taxon>Aconoidasida</taxon>
        <taxon>Haemosporida</taxon>
        <taxon>Plasmodiidae</taxon>
        <taxon>Plasmodium</taxon>
        <taxon>Plasmodium (Vinckeia)</taxon>
    </lineage>
</organism>
<sequence length="362" mass="42358">MIFKKALYILLFLYIAIVKKGESKPGSKHPFLFKNLVIDKKKLDSSYYNKYDNIKWNGKIIAIGDIHGDIESLKLILRHSKLIGENDNWIGDNVLLVQNGDVFDRGIYGPIIYNFLFKLQKEAIKKNSRVILIMGNHEQLNLCGYFNYVNPKEIEMFFHNDANYRYHSFVNPYGEYHKRLIRLPPMVKVNNIIFTHGGLNLLISKLSINDINLKTRLQIENNCKPIKYDSFQNYLSRDGVLWSDAMSRNVPYYEKEKCSELFQILDKYDAKYLVVGHTRQPSHQIGSYCNNHYFLIDTGMSLFTNYGQPYPNYLKIDDHKIKAVRLIVEKKKKCPHTEIQLNTPNKIKYCVQESQTNLNPVL</sequence>
<feature type="signal peptide" evidence="2">
    <location>
        <begin position="1"/>
        <end position="23"/>
    </location>
</feature>
<feature type="chain" id="PRO_5021317624" description="Shewanella-like protein phosphatase 1" evidence="2">
    <location>
        <begin position="24"/>
        <end position="362"/>
    </location>
</feature>
<feature type="active site" description="Proton donor" evidence="1">
    <location>
        <position position="137"/>
    </location>
</feature>
<feature type="binding site" evidence="1">
    <location>
        <position position="65"/>
    </location>
    <ligand>
        <name>Mn(2+)</name>
        <dbReference type="ChEBI" id="CHEBI:29035"/>
        <label>1</label>
    </ligand>
</feature>
<feature type="binding site" evidence="1">
    <location>
        <position position="67"/>
    </location>
    <ligand>
        <name>Mn(2+)</name>
        <dbReference type="ChEBI" id="CHEBI:29035"/>
        <label>1</label>
    </ligand>
</feature>
<feature type="binding site" evidence="1">
    <location>
        <position position="101"/>
    </location>
    <ligand>
        <name>Mn(2+)</name>
        <dbReference type="ChEBI" id="CHEBI:29035"/>
        <label>1</label>
    </ligand>
</feature>
<feature type="binding site" evidence="1">
    <location>
        <position position="101"/>
    </location>
    <ligand>
        <name>Mn(2+)</name>
        <dbReference type="ChEBI" id="CHEBI:29035"/>
        <label>2</label>
    </ligand>
</feature>
<feature type="binding site" evidence="1">
    <location>
        <position position="136"/>
    </location>
    <ligand>
        <name>Mn(2+)</name>
        <dbReference type="ChEBI" id="CHEBI:29035"/>
        <label>2</label>
    </ligand>
</feature>
<feature type="binding site" evidence="1">
    <location>
        <position position="196"/>
    </location>
    <ligand>
        <name>Mn(2+)</name>
        <dbReference type="ChEBI" id="CHEBI:29035"/>
        <label>2</label>
    </ligand>
</feature>
<proteinExistence type="evidence at transcript level"/>
<protein>
    <recommendedName>
        <fullName evidence="4">Shewanella-like protein phosphatase 1</fullName>
        <ecNumber evidence="3">3.1.-.-</ecNumber>
    </recommendedName>
</protein>
<gene>
    <name evidence="4" type="primary">SHLP1</name>
    <name evidence="5" type="ORF">PBANKA_133240</name>
    <name evidence="6" type="ORF">PBANKA_1332400</name>
</gene>
<reference evidence="7" key="1">
    <citation type="journal article" date="2014" name="BMC Biol.">
        <title>A comprehensive evaluation of rodent malaria parasite genomes and gene expression.</title>
        <authorList>
            <person name="Otto T.D."/>
            <person name="Bohme U."/>
            <person name="Jackson A.P."/>
            <person name="Hunt M."/>
            <person name="Franke-Fayard B."/>
            <person name="Hoeijmakers W.A."/>
            <person name="Religa A.A."/>
            <person name="Robertson L."/>
            <person name="Sanders M."/>
            <person name="Ogun S.A."/>
            <person name="Cunningham D."/>
            <person name="Erhart A."/>
            <person name="Billker O."/>
            <person name="Khan S.M."/>
            <person name="Stunnenberg H.G."/>
            <person name="Langhorne J."/>
            <person name="Holder A.A."/>
            <person name="Waters A.P."/>
            <person name="Newbold C.I."/>
            <person name="Pain A."/>
            <person name="Berriman M."/>
            <person name="Janse C.J."/>
        </authorList>
    </citation>
    <scope>NUCLEOTIDE SEQUENCE [LARGE SCALE GENOMIC DNA]</scope>
    <source>
        <strain evidence="7">ANKA</strain>
    </source>
</reference>
<reference evidence="5" key="2">
    <citation type="journal article" date="2013" name="Cell Rep.">
        <title>An ancient protein phosphatase, SHLP1, is critical to microneme development in Plasmodium ookinetes and parasite transmission.</title>
        <authorList>
            <person name="Patzewitz E.M."/>
            <person name="Guttery D.S."/>
            <person name="Poulin B."/>
            <person name="Ramakrishnan C."/>
            <person name="Ferguson D.J."/>
            <person name="Wall R.J."/>
            <person name="Brady D."/>
            <person name="Holder A.A."/>
            <person name="Szoeor B."/>
            <person name="Tewari R."/>
        </authorList>
    </citation>
    <scope>FUNCTION</scope>
    <scope>DEVELOPMENTAL STAGE</scope>
    <scope>DISRUPTION PHENOTYPE</scope>
</reference>
<dbReference type="EC" id="3.1.-.-" evidence="3"/>
<dbReference type="EMBL" id="LK023128">
    <property type="protein sequence ID" value="VUC57710.1"/>
    <property type="molecule type" value="Genomic_DNA"/>
</dbReference>
<dbReference type="RefSeq" id="XP_675411.1">
    <property type="nucleotide sequence ID" value="XM_670319.1"/>
</dbReference>
<dbReference type="SMR" id="A0A509AQU3"/>
<dbReference type="FunCoup" id="A0A509AQU3">
    <property type="interactions" value="9"/>
</dbReference>
<dbReference type="STRING" id="5823.A0A509AQU3"/>
<dbReference type="VEuPathDB" id="PlasmoDB:PBANKA_1332400"/>
<dbReference type="InParanoid" id="A0A509AQU3"/>
<dbReference type="OMA" id="NEVLWFM"/>
<dbReference type="Proteomes" id="UP000074855">
    <property type="component" value="Chromosome 13"/>
</dbReference>
<dbReference type="GO" id="GO:0005783">
    <property type="term" value="C:endoplasmic reticulum"/>
    <property type="evidence" value="ECO:0000314"/>
    <property type="project" value="UniProtKB"/>
</dbReference>
<dbReference type="GO" id="GO:0019898">
    <property type="term" value="C:extrinsic component of membrane"/>
    <property type="evidence" value="ECO:0000314"/>
    <property type="project" value="UniProtKB"/>
</dbReference>
<dbReference type="GO" id="GO:0046872">
    <property type="term" value="F:metal ion binding"/>
    <property type="evidence" value="ECO:0007669"/>
    <property type="project" value="UniProtKB-KW"/>
</dbReference>
<dbReference type="GO" id="GO:0016791">
    <property type="term" value="F:phosphatase activity"/>
    <property type="evidence" value="ECO:0000314"/>
    <property type="project" value="UniProtKB"/>
</dbReference>
<dbReference type="GO" id="GO:0004721">
    <property type="term" value="F:phosphoprotein phosphatase activity"/>
    <property type="evidence" value="ECO:0007669"/>
    <property type="project" value="UniProtKB-KW"/>
</dbReference>
<dbReference type="GO" id="GO:0044129">
    <property type="term" value="P:positive regulation of development of symbiont in host"/>
    <property type="evidence" value="ECO:0000315"/>
    <property type="project" value="UniProtKB"/>
</dbReference>
<dbReference type="GO" id="GO:0033363">
    <property type="term" value="P:secretory granule organization"/>
    <property type="evidence" value="ECO:0000315"/>
    <property type="project" value="UniProtKB"/>
</dbReference>
<dbReference type="Gene3D" id="3.60.21.10">
    <property type="match status" value="1"/>
</dbReference>
<dbReference type="InterPro" id="IPR004843">
    <property type="entry name" value="Calcineurin-like_PHP_ApaH"/>
</dbReference>
<dbReference type="InterPro" id="IPR029052">
    <property type="entry name" value="Metallo-depent_PP-like"/>
</dbReference>
<dbReference type="PANTHER" id="PTHR46546">
    <property type="entry name" value="SHEWANELLA-LIKE PROTEIN PHOSPHATASE 1"/>
    <property type="match status" value="1"/>
</dbReference>
<dbReference type="PANTHER" id="PTHR46546:SF4">
    <property type="entry name" value="SHEWANELLA-LIKE PROTEIN PHOSPHATASE 1"/>
    <property type="match status" value="1"/>
</dbReference>
<dbReference type="Pfam" id="PF00149">
    <property type="entry name" value="Metallophos"/>
    <property type="match status" value="1"/>
</dbReference>
<dbReference type="SUPFAM" id="SSF56300">
    <property type="entry name" value="Metallo-dependent phosphatases"/>
    <property type="match status" value="1"/>
</dbReference>
<evidence type="ECO:0000250" key="1">
    <source>
        <dbReference type="UniProtKB" id="P36873"/>
    </source>
</evidence>
<evidence type="ECO:0000255" key="2"/>
<evidence type="ECO:0000269" key="3">
    <source>
    </source>
</evidence>
<evidence type="ECO:0000303" key="4">
    <source>
    </source>
</evidence>
<evidence type="ECO:0000305" key="5"/>
<evidence type="ECO:0000312" key="6">
    <source>
        <dbReference type="EMBL" id="VUC57710.1"/>
    </source>
</evidence>
<evidence type="ECO:0000312" key="7">
    <source>
        <dbReference type="Proteomes" id="UP000074855"/>
    </source>
</evidence>